<reference key="1">
    <citation type="journal article" date="2003" name="Nature">
        <title>Genome divergence in two Prochlorococcus ecotypes reflects oceanic niche differentiation.</title>
        <authorList>
            <person name="Rocap G."/>
            <person name="Larimer F.W."/>
            <person name="Lamerdin J.E."/>
            <person name="Malfatti S."/>
            <person name="Chain P."/>
            <person name="Ahlgren N.A."/>
            <person name="Arellano A."/>
            <person name="Coleman M."/>
            <person name="Hauser L."/>
            <person name="Hess W.R."/>
            <person name="Johnson Z.I."/>
            <person name="Land M.L."/>
            <person name="Lindell D."/>
            <person name="Post A.F."/>
            <person name="Regala W."/>
            <person name="Shah M."/>
            <person name="Shaw S.L."/>
            <person name="Steglich C."/>
            <person name="Sullivan M.B."/>
            <person name="Ting C.S."/>
            <person name="Tolonen A."/>
            <person name="Webb E.A."/>
            <person name="Zinser E.R."/>
            <person name="Chisholm S.W."/>
        </authorList>
    </citation>
    <scope>NUCLEOTIDE SEQUENCE [LARGE SCALE GENOMIC DNA]</scope>
    <source>
        <strain>MIT 9313</strain>
    </source>
</reference>
<keyword id="KW-0997">Cell inner membrane</keyword>
<keyword id="KW-1003">Cell membrane</keyword>
<keyword id="KW-0143">Chaperone</keyword>
<keyword id="KW-0472">Membrane</keyword>
<keyword id="KW-0653">Protein transport</keyword>
<keyword id="KW-1185">Reference proteome</keyword>
<keyword id="KW-0812">Transmembrane</keyword>
<keyword id="KW-1133">Transmembrane helix</keyword>
<keyword id="KW-0813">Transport</keyword>
<feature type="chain" id="PRO_0000124739" description="Membrane protein insertase YidC">
    <location>
        <begin position="1"/>
        <end position="378"/>
    </location>
</feature>
<feature type="transmembrane region" description="Helical" evidence="2">
    <location>
        <begin position="20"/>
        <end position="42"/>
    </location>
</feature>
<feature type="transmembrane region" description="Helical" evidence="2">
    <location>
        <begin position="93"/>
        <end position="113"/>
    </location>
</feature>
<feature type="transmembrane region" description="Helical" evidence="2">
    <location>
        <begin position="264"/>
        <end position="284"/>
    </location>
</feature>
<feature type="transmembrane region" description="Helical" evidence="2">
    <location>
        <begin position="304"/>
        <end position="324"/>
    </location>
</feature>
<comment type="function">
    <text evidence="1">Required for the insertion and/or proper folding and/or complex formation of integral membrane proteins into the membrane. Involved in integration of membrane proteins that insert both dependently and independently of the Sec translocase complex, as well as at least some lipoproteins. Aids folding of multispanning membrane proteins (By similarity).</text>
</comment>
<comment type="function">
    <text evidence="1">Probably also aids protein insertion, folding and/or assembly of membrane complexes destined for the thylakoid.</text>
</comment>
<comment type="subunit">
    <text evidence="1">Interacts with the Sec translocase complex via SecD. Specifically interacts with transmembrane segments of nascent integral membrane proteins during membrane integration (By similarity).</text>
</comment>
<comment type="subcellular location">
    <subcellularLocation>
        <location evidence="1">Cell inner membrane</location>
        <topology evidence="1">Multi-pass membrane protein</topology>
    </subcellularLocation>
</comment>
<comment type="similarity">
    <text evidence="3">Belongs to the OXA1/ALB3/YidC family. Type 1 subfamily.</text>
</comment>
<sequence length="378" mass="40735">MIGYISDNILLPILDFFYGLVPSYGLAIVALTVVIRLALFPLSAGSIRSARRMRIAQPAMKKRQDEIKSRYAKDPQKQQEELGKVMKEFGNPLSGCLPLLVQMPILFALFATLRGSPFADVPYLVNLKVLPSDQIAAIEPKPFTSSKHSIFISETKHFPVIASLPSGTKLGVGDKAQIKLQTLTGESFTSRLSGVEGGTKFTPTWSVTKGDDLVKVSADGTVQALAEGDATVQGKIPGLAAQSGFLFIKALGQVGFYVDGEINWDIAILVGGFGLTLLVSQILSGRGLPANPQQSTANKITPVMITGMFLFFPLPAGVLLYMVIANIFQAGQTFLLSREALPENLQKILNDQLSKPALATEAIGGSDRLPFEPKKRSK</sequence>
<evidence type="ECO:0000250" key="1"/>
<evidence type="ECO:0000255" key="2"/>
<evidence type="ECO:0000305" key="3"/>
<gene>
    <name type="primary">yidC</name>
    <name type="ordered locus">PMT_1371</name>
</gene>
<protein>
    <recommendedName>
        <fullName>Membrane protein insertase YidC</fullName>
    </recommendedName>
    <alternativeName>
        <fullName>Foldase YidC</fullName>
    </alternativeName>
    <alternativeName>
        <fullName>Membrane integrase YidC</fullName>
    </alternativeName>
    <alternativeName>
        <fullName>Membrane protein YidC</fullName>
    </alternativeName>
</protein>
<organism>
    <name type="scientific">Prochlorococcus marinus (strain MIT 9313)</name>
    <dbReference type="NCBI Taxonomy" id="74547"/>
    <lineage>
        <taxon>Bacteria</taxon>
        <taxon>Bacillati</taxon>
        <taxon>Cyanobacteriota</taxon>
        <taxon>Cyanophyceae</taxon>
        <taxon>Synechococcales</taxon>
        <taxon>Prochlorococcaceae</taxon>
        <taxon>Prochlorococcus</taxon>
    </lineage>
</organism>
<proteinExistence type="inferred from homology"/>
<accession>Q7V610</accession>
<name>YIDC_PROMM</name>
<dbReference type="EMBL" id="BX548175">
    <property type="protein sequence ID" value="CAE21546.1"/>
    <property type="molecule type" value="Genomic_DNA"/>
</dbReference>
<dbReference type="RefSeq" id="WP_011130739.1">
    <property type="nucleotide sequence ID" value="NC_005071.1"/>
</dbReference>
<dbReference type="KEGG" id="pmt:PMT_1371"/>
<dbReference type="eggNOG" id="COG0706">
    <property type="taxonomic scope" value="Bacteria"/>
</dbReference>
<dbReference type="HOGENOM" id="CLU_038573_0_0_3"/>
<dbReference type="OrthoDB" id="9780552at2"/>
<dbReference type="Proteomes" id="UP000001423">
    <property type="component" value="Chromosome"/>
</dbReference>
<dbReference type="GO" id="GO:0005886">
    <property type="term" value="C:plasma membrane"/>
    <property type="evidence" value="ECO:0007669"/>
    <property type="project" value="UniProtKB-SubCell"/>
</dbReference>
<dbReference type="GO" id="GO:0032977">
    <property type="term" value="F:membrane insertase activity"/>
    <property type="evidence" value="ECO:0007669"/>
    <property type="project" value="InterPro"/>
</dbReference>
<dbReference type="GO" id="GO:0051205">
    <property type="term" value="P:protein insertion into membrane"/>
    <property type="evidence" value="ECO:0007669"/>
    <property type="project" value="TreeGrafter"/>
</dbReference>
<dbReference type="GO" id="GO:0015031">
    <property type="term" value="P:protein transport"/>
    <property type="evidence" value="ECO:0007669"/>
    <property type="project" value="UniProtKB-KW"/>
</dbReference>
<dbReference type="CDD" id="cd20070">
    <property type="entry name" value="5TM_YidC_Alb3"/>
    <property type="match status" value="1"/>
</dbReference>
<dbReference type="InterPro" id="IPR001708">
    <property type="entry name" value="YidC/ALB3/OXA1/COX18"/>
</dbReference>
<dbReference type="InterPro" id="IPR028055">
    <property type="entry name" value="YidC/Oxa/ALB_C"/>
</dbReference>
<dbReference type="InterPro" id="IPR047196">
    <property type="entry name" value="YidC_ALB_C"/>
</dbReference>
<dbReference type="NCBIfam" id="NF002734">
    <property type="entry name" value="PRK02654.1"/>
    <property type="match status" value="1"/>
</dbReference>
<dbReference type="NCBIfam" id="TIGR03592">
    <property type="entry name" value="yidC_oxa1_cterm"/>
    <property type="match status" value="1"/>
</dbReference>
<dbReference type="PANTHER" id="PTHR12428:SF65">
    <property type="entry name" value="CYTOCHROME C OXIDASE ASSEMBLY PROTEIN COX18, MITOCHONDRIAL"/>
    <property type="match status" value="1"/>
</dbReference>
<dbReference type="PANTHER" id="PTHR12428">
    <property type="entry name" value="OXA1"/>
    <property type="match status" value="1"/>
</dbReference>
<dbReference type="Pfam" id="PF02096">
    <property type="entry name" value="60KD_IMP"/>
    <property type="match status" value="1"/>
</dbReference>